<gene>
    <name evidence="1" type="primary">rlmE</name>
    <name evidence="1" type="synonym">ftsJ</name>
    <name evidence="1" type="synonym">rrmJ</name>
    <name type="ordered locus">Patl_1570</name>
</gene>
<name>RLME_PSEA6</name>
<reference key="1">
    <citation type="submission" date="2006-06" db="EMBL/GenBank/DDBJ databases">
        <title>Complete sequence of Pseudoalteromonas atlantica T6c.</title>
        <authorList>
            <consortium name="US DOE Joint Genome Institute"/>
            <person name="Copeland A."/>
            <person name="Lucas S."/>
            <person name="Lapidus A."/>
            <person name="Barry K."/>
            <person name="Detter J.C."/>
            <person name="Glavina del Rio T."/>
            <person name="Hammon N."/>
            <person name="Israni S."/>
            <person name="Dalin E."/>
            <person name="Tice H."/>
            <person name="Pitluck S."/>
            <person name="Saunders E."/>
            <person name="Brettin T."/>
            <person name="Bruce D."/>
            <person name="Han C."/>
            <person name="Tapia R."/>
            <person name="Gilna P."/>
            <person name="Schmutz J."/>
            <person name="Larimer F."/>
            <person name="Land M."/>
            <person name="Hauser L."/>
            <person name="Kyrpides N."/>
            <person name="Kim E."/>
            <person name="Karls A.C."/>
            <person name="Bartlett D."/>
            <person name="Higgins B.P."/>
            <person name="Richardson P."/>
        </authorList>
    </citation>
    <scope>NUCLEOTIDE SEQUENCE [LARGE SCALE GENOMIC DNA]</scope>
    <source>
        <strain>T6c / ATCC BAA-1087</strain>
    </source>
</reference>
<evidence type="ECO:0000255" key="1">
    <source>
        <dbReference type="HAMAP-Rule" id="MF_01547"/>
    </source>
</evidence>
<keyword id="KW-0963">Cytoplasm</keyword>
<keyword id="KW-0489">Methyltransferase</keyword>
<keyword id="KW-0698">rRNA processing</keyword>
<keyword id="KW-0949">S-adenosyl-L-methionine</keyword>
<keyword id="KW-0808">Transferase</keyword>
<accession>Q15VJ6</accession>
<protein>
    <recommendedName>
        <fullName evidence="1">Ribosomal RNA large subunit methyltransferase E</fullName>
        <ecNumber evidence="1">2.1.1.166</ecNumber>
    </recommendedName>
    <alternativeName>
        <fullName evidence="1">23S rRNA Um2552 methyltransferase</fullName>
    </alternativeName>
    <alternativeName>
        <fullName evidence="1">rRNA (uridine-2'-O-)-methyltransferase</fullName>
    </alternativeName>
</protein>
<comment type="function">
    <text evidence="1">Specifically methylates the uridine in position 2552 of 23S rRNA at the 2'-O position of the ribose in the fully assembled 50S ribosomal subunit.</text>
</comment>
<comment type="catalytic activity">
    <reaction evidence="1">
        <text>uridine(2552) in 23S rRNA + S-adenosyl-L-methionine = 2'-O-methyluridine(2552) in 23S rRNA + S-adenosyl-L-homocysteine + H(+)</text>
        <dbReference type="Rhea" id="RHEA:42720"/>
        <dbReference type="Rhea" id="RHEA-COMP:10202"/>
        <dbReference type="Rhea" id="RHEA-COMP:10203"/>
        <dbReference type="ChEBI" id="CHEBI:15378"/>
        <dbReference type="ChEBI" id="CHEBI:57856"/>
        <dbReference type="ChEBI" id="CHEBI:59789"/>
        <dbReference type="ChEBI" id="CHEBI:65315"/>
        <dbReference type="ChEBI" id="CHEBI:74478"/>
        <dbReference type="EC" id="2.1.1.166"/>
    </reaction>
</comment>
<comment type="subcellular location">
    <subcellularLocation>
        <location evidence="1">Cytoplasm</location>
    </subcellularLocation>
</comment>
<comment type="similarity">
    <text evidence="1">Belongs to the class I-like SAM-binding methyltransferase superfamily. RNA methyltransferase RlmE family.</text>
</comment>
<sequence>MGKNKQSESSKRWLKEHFDDKYVIKAKKQGLRSRAVFKLEEIQAKDGLIKPGMTVVDLGAAPGGWSQYAVKQVGDNGHVIACDILSMDPLPGVDFLMGDFREEAVLDALLNKIGGKNVDVVMSDMAPNMTGNDTADQAKSMYLVELSLDMCRQVLKKNGSYTVKVFMGEGFDQFFNEVKNAFKVVKTRKPDSSRARSREVYLVATGFKL</sequence>
<organism>
    <name type="scientific">Pseudoalteromonas atlantica (strain T6c / ATCC BAA-1087)</name>
    <dbReference type="NCBI Taxonomy" id="3042615"/>
    <lineage>
        <taxon>Bacteria</taxon>
        <taxon>Pseudomonadati</taxon>
        <taxon>Pseudomonadota</taxon>
        <taxon>Gammaproteobacteria</taxon>
        <taxon>Alteromonadales</taxon>
        <taxon>Alteromonadaceae</taxon>
        <taxon>Paraglaciecola</taxon>
    </lineage>
</organism>
<proteinExistence type="inferred from homology"/>
<dbReference type="EC" id="2.1.1.166" evidence="1"/>
<dbReference type="EMBL" id="CP000388">
    <property type="protein sequence ID" value="ABG40092.1"/>
    <property type="molecule type" value="Genomic_DNA"/>
</dbReference>
<dbReference type="RefSeq" id="WP_011574406.1">
    <property type="nucleotide sequence ID" value="NC_008228.1"/>
</dbReference>
<dbReference type="SMR" id="Q15VJ6"/>
<dbReference type="STRING" id="342610.Patl_1570"/>
<dbReference type="KEGG" id="pat:Patl_1570"/>
<dbReference type="eggNOG" id="COG0293">
    <property type="taxonomic scope" value="Bacteria"/>
</dbReference>
<dbReference type="HOGENOM" id="CLU_009422_4_0_6"/>
<dbReference type="OrthoDB" id="9790080at2"/>
<dbReference type="Proteomes" id="UP000001981">
    <property type="component" value="Chromosome"/>
</dbReference>
<dbReference type="GO" id="GO:0005737">
    <property type="term" value="C:cytoplasm"/>
    <property type="evidence" value="ECO:0007669"/>
    <property type="project" value="UniProtKB-SubCell"/>
</dbReference>
<dbReference type="GO" id="GO:0008650">
    <property type="term" value="F:rRNA (uridine-2'-O-)-methyltransferase activity"/>
    <property type="evidence" value="ECO:0007669"/>
    <property type="project" value="UniProtKB-UniRule"/>
</dbReference>
<dbReference type="CDD" id="cd02440">
    <property type="entry name" value="AdoMet_MTases"/>
    <property type="match status" value="1"/>
</dbReference>
<dbReference type="FunFam" id="3.40.50.150:FF:000005">
    <property type="entry name" value="Ribosomal RNA large subunit methyltransferase E"/>
    <property type="match status" value="1"/>
</dbReference>
<dbReference type="Gene3D" id="3.40.50.150">
    <property type="entry name" value="Vaccinia Virus protein VP39"/>
    <property type="match status" value="1"/>
</dbReference>
<dbReference type="HAMAP" id="MF_01547">
    <property type="entry name" value="RNA_methyltr_E"/>
    <property type="match status" value="1"/>
</dbReference>
<dbReference type="InterPro" id="IPR050082">
    <property type="entry name" value="RNA_methyltr_RlmE"/>
</dbReference>
<dbReference type="InterPro" id="IPR002877">
    <property type="entry name" value="RNA_MeTrfase_FtsJ_dom"/>
</dbReference>
<dbReference type="InterPro" id="IPR015507">
    <property type="entry name" value="rRNA-MeTfrase_E"/>
</dbReference>
<dbReference type="InterPro" id="IPR029063">
    <property type="entry name" value="SAM-dependent_MTases_sf"/>
</dbReference>
<dbReference type="NCBIfam" id="NF008390">
    <property type="entry name" value="PRK11188.1"/>
    <property type="match status" value="1"/>
</dbReference>
<dbReference type="PANTHER" id="PTHR10920">
    <property type="entry name" value="RIBOSOMAL RNA METHYLTRANSFERASE"/>
    <property type="match status" value="1"/>
</dbReference>
<dbReference type="PANTHER" id="PTHR10920:SF18">
    <property type="entry name" value="RRNA METHYLTRANSFERASE 2, MITOCHONDRIAL"/>
    <property type="match status" value="1"/>
</dbReference>
<dbReference type="Pfam" id="PF01728">
    <property type="entry name" value="FtsJ"/>
    <property type="match status" value="1"/>
</dbReference>
<dbReference type="PIRSF" id="PIRSF005461">
    <property type="entry name" value="23S_rRNA_mtase"/>
    <property type="match status" value="1"/>
</dbReference>
<dbReference type="SUPFAM" id="SSF53335">
    <property type="entry name" value="S-adenosyl-L-methionine-dependent methyltransferases"/>
    <property type="match status" value="1"/>
</dbReference>
<feature type="chain" id="PRO_0000282773" description="Ribosomal RNA large subunit methyltransferase E">
    <location>
        <begin position="1"/>
        <end position="209"/>
    </location>
</feature>
<feature type="active site" description="Proton acceptor" evidence="1">
    <location>
        <position position="164"/>
    </location>
</feature>
<feature type="binding site" evidence="1">
    <location>
        <position position="63"/>
    </location>
    <ligand>
        <name>S-adenosyl-L-methionine</name>
        <dbReference type="ChEBI" id="CHEBI:59789"/>
    </ligand>
</feature>
<feature type="binding site" evidence="1">
    <location>
        <position position="65"/>
    </location>
    <ligand>
        <name>S-adenosyl-L-methionine</name>
        <dbReference type="ChEBI" id="CHEBI:59789"/>
    </ligand>
</feature>
<feature type="binding site" evidence="1">
    <location>
        <position position="83"/>
    </location>
    <ligand>
        <name>S-adenosyl-L-methionine</name>
        <dbReference type="ChEBI" id="CHEBI:59789"/>
    </ligand>
</feature>
<feature type="binding site" evidence="1">
    <location>
        <position position="99"/>
    </location>
    <ligand>
        <name>S-adenosyl-L-methionine</name>
        <dbReference type="ChEBI" id="CHEBI:59789"/>
    </ligand>
</feature>
<feature type="binding site" evidence="1">
    <location>
        <position position="124"/>
    </location>
    <ligand>
        <name>S-adenosyl-L-methionine</name>
        <dbReference type="ChEBI" id="CHEBI:59789"/>
    </ligand>
</feature>